<comment type="function">
    <text evidence="4 6">Has a dual function in uptake of nutrients and induction of host cell death. The N-terminal domain (NTD) forms an outer membrane channel and is used for uptake of nutrients across the outer membrane. The secreted C-terminal toxic domain (TNT) acts as a glycohydrolase, which hydrolyzes the essential cellular coenzyme NAD(+) in the cytosol of infected macrophages, leading to necrotic host cell death. Both functions are required for survival, replication and cytotoxicity of M.tuberculosis in macrophages.</text>
</comment>
<comment type="catalytic activity">
    <reaction evidence="6">
        <text>NAD(+) + H2O = ADP-D-ribose + nicotinamide + H(+)</text>
        <dbReference type="Rhea" id="RHEA:16301"/>
        <dbReference type="ChEBI" id="CHEBI:15377"/>
        <dbReference type="ChEBI" id="CHEBI:15378"/>
        <dbReference type="ChEBI" id="CHEBI:17154"/>
        <dbReference type="ChEBI" id="CHEBI:57540"/>
        <dbReference type="ChEBI" id="CHEBI:57967"/>
        <dbReference type="EC" id="3.2.2.5"/>
    </reaction>
</comment>
<comment type="activity regulation">
    <text evidence="6">Glycohydrolase activity is completely inhibited by interaction with the immunity factor for TNT (IFT). This inhibition protects M.tuberculosis from self-poisoning.</text>
</comment>
<comment type="biophysicochemical properties">
    <kinetics>
        <KM evidence="6">614 uM for NAD(+)</KM>
        <text evidence="6">kcat is 52 sec(-1).</text>
    </kinetics>
    <phDependence>
        <text evidence="6">Optimum pH is 6.5.</text>
    </phDependence>
</comment>
<comment type="subunit">
    <text evidence="4 6">Interacts with the immunity factor for TNT (IFT) (PubMed:26237511). Oligomer formation is required for channel activity (PubMed:24753609).</text>
</comment>
<comment type="interaction">
    <interactant intactId="EBI-16167127">
        <id>O05442</id>
    </interactant>
    <interactant intactId="EBI-16167151">
        <id>O05443</id>
        <label>Rv3902c</label>
    </interactant>
    <organismsDiffer>false</organismsDiffer>
    <experiments>5</experiments>
</comment>
<comment type="subcellular location">
    <molecule>N-terminal channel domain</molecule>
    <subcellularLocation>
        <location evidence="4">Cell outer membrane</location>
    </subcellularLocation>
</comment>
<comment type="subcellular location">
    <molecule>Tuberculosis necrotizing toxin</molecule>
    <subcellularLocation>
        <location evidence="4">Secreted</location>
    </subcellularLocation>
    <subcellularLocation>
        <location evidence="4">Cell surface</location>
    </subcellularLocation>
    <subcellularLocation>
        <location evidence="6">Host cytoplasm</location>
        <location evidence="6">Host cytosol</location>
    </subcellularLocation>
    <text evidence="6">Secreted into the cytosol of infected macrophages while the bacteria are still confined to the phagosome. Access to the macrophage cytosol depends on the ESX-1 / type VII secretion system (T7SS).</text>
</comment>
<comment type="PTM">
    <text evidence="4">The C-terminal toxic domain is cleaved, probably after integration of CpnT into the outer membrane.</text>
</comment>
<comment type="disruption phenotype">
    <text evidence="4 5 6">Deletion reduces growth on glycerol and glucose as sole carbon sources. Deletion mutant does not replicate in differentiated THP-1 macrophages and lacks cytotoxicity (PubMed:24753609). Lack of cpnT does not increase drug resistance in vitro (PubMed:25645841). Deletion mutant does not decrease NAD(+) levels in infected macrophages (PubMed:26237511).</text>
</comment>
<proteinExistence type="evidence at protein level"/>
<protein>
    <recommendedName>
        <fullName evidence="9">Outer membrane channel protein CpnT</fullName>
    </recommendedName>
    <alternativeName>
        <fullName evidence="7">Channel protein with necrosis-inducing toxin</fullName>
    </alternativeName>
    <component>
        <recommendedName>
            <fullName evidence="9">N-terminal channel domain</fullName>
        </recommendedName>
    </component>
    <component>
        <recommendedName>
            <fullName evidence="8">Tuberculosis necrotizing toxin</fullName>
            <shortName evidence="8">TNT</shortName>
        </recommendedName>
        <alternativeName>
            <fullName evidence="8">NAD(+) glycohydrolase</fullName>
            <ecNumber evidence="6">3.2.2.5</ecNumber>
        </alternativeName>
    </component>
</protein>
<organism>
    <name type="scientific">Mycobacterium tuberculosis (strain ATCC 25618 / H37Rv)</name>
    <dbReference type="NCBI Taxonomy" id="83332"/>
    <lineage>
        <taxon>Bacteria</taxon>
        <taxon>Bacillati</taxon>
        <taxon>Actinomycetota</taxon>
        <taxon>Actinomycetes</taxon>
        <taxon>Mycobacteriales</taxon>
        <taxon>Mycobacteriaceae</taxon>
        <taxon>Mycobacterium</taxon>
        <taxon>Mycobacterium tuberculosis complex</taxon>
    </lineage>
</organism>
<evidence type="ECO:0000250" key="1">
    <source>
        <dbReference type="UniProtKB" id="Q4WL81"/>
    </source>
</evidence>
<evidence type="ECO:0000255" key="2"/>
<evidence type="ECO:0000256" key="3">
    <source>
        <dbReference type="SAM" id="MobiDB-lite"/>
    </source>
</evidence>
<evidence type="ECO:0000269" key="4">
    <source>
    </source>
</evidence>
<evidence type="ECO:0000269" key="5">
    <source>
    </source>
</evidence>
<evidence type="ECO:0000269" key="6">
    <source>
    </source>
</evidence>
<evidence type="ECO:0000303" key="7">
    <source>
    </source>
</evidence>
<evidence type="ECO:0000303" key="8">
    <source>
    </source>
</evidence>
<evidence type="ECO:0000305" key="9"/>
<evidence type="ECO:0000305" key="10">
    <source>
    </source>
</evidence>
<evidence type="ECO:0000312" key="11">
    <source>
        <dbReference type="EMBL" id="CCP46732.1"/>
    </source>
</evidence>
<evidence type="ECO:0007744" key="12">
    <source>
        <dbReference type="PDB" id="4QLP"/>
    </source>
</evidence>
<evidence type="ECO:0007829" key="13">
    <source>
        <dbReference type="PDB" id="4QLP"/>
    </source>
</evidence>
<accession>O05442</accession>
<accession>F2GDR4</accession>
<accession>I6Y4T3</accession>
<accession>Q7D4M4</accession>
<feature type="chain" id="PRO_0000437782" description="Outer membrane channel protein CpnT">
    <location>
        <begin position="1"/>
        <end position="846"/>
    </location>
</feature>
<feature type="chain" id="PRO_0000437783" description="N-terminal channel domain" evidence="9">
    <location>
        <begin position="1"/>
        <end status="unknown"/>
    </location>
</feature>
<feature type="chain" id="PRO_0000437784" description="Tuberculosis necrotizing toxin" evidence="9">
    <location>
        <begin status="unknown"/>
        <end position="846"/>
    </location>
</feature>
<feature type="domain" description="TNT" evidence="2">
    <location>
        <begin position="751"/>
        <end position="846"/>
    </location>
</feature>
<feature type="region of interest" description="NTD" evidence="10">
    <location>
        <begin position="1"/>
        <end position="443"/>
    </location>
</feature>
<feature type="region of interest" description="Disordered" evidence="3">
    <location>
        <begin position="442"/>
        <end position="630"/>
    </location>
</feature>
<feature type="compositionally biased region" description="Pro residues" evidence="3">
    <location>
        <begin position="450"/>
        <end position="466"/>
    </location>
</feature>
<feature type="compositionally biased region" description="Pro residues" evidence="3">
    <location>
        <begin position="475"/>
        <end position="504"/>
    </location>
</feature>
<feature type="compositionally biased region" description="Low complexity" evidence="3">
    <location>
        <begin position="508"/>
        <end position="517"/>
    </location>
</feature>
<feature type="compositionally biased region" description="Low complexity" evidence="3">
    <location>
        <begin position="562"/>
        <end position="586"/>
    </location>
</feature>
<feature type="active site" evidence="1">
    <location>
        <position position="757"/>
    </location>
</feature>
<feature type="active site" evidence="1">
    <location>
        <position position="822"/>
    </location>
</feature>
<feature type="binding site" evidence="1">
    <location>
        <position position="780"/>
    </location>
    <ligand>
        <name>NAD(+)</name>
        <dbReference type="ChEBI" id="CHEBI:57540"/>
    </ligand>
</feature>
<feature type="mutagenesis site" description="Decreases glycohydrolase activity and cytotoxicity in macrophages." evidence="6">
    <original>Y</original>
    <variation>A</variation>
    <location>
        <position position="765"/>
    </location>
</feature>
<feature type="mutagenesis site" description="Lack of glycohydrolase activity and of cytotoxicity; when associated with K-822." evidence="6">
    <original>H</original>
    <variation>N</variation>
    <location>
        <position position="792"/>
    </location>
</feature>
<feature type="mutagenesis site" description="Unfolded. Lack of glycohydrolase activity. Abolishes toxicity." evidence="4 6">
    <original>G</original>
    <variation>V</variation>
    <location>
        <position position="818"/>
    </location>
</feature>
<feature type="mutagenesis site" description="2-fold decrease in glycohydrolase activity. Intermediate cytotoxicity." evidence="6">
    <original>Q</original>
    <variation>A</variation>
    <location>
        <position position="822"/>
    </location>
</feature>
<feature type="mutagenesis site" description="Lack of glycohydrolase activity and of cytotoxicity; when associated with N-792." evidence="6">
    <original>Q</original>
    <variation>K</variation>
    <location>
        <position position="822"/>
    </location>
</feature>
<feature type="turn" evidence="13">
    <location>
        <begin position="678"/>
        <end position="680"/>
    </location>
</feature>
<feature type="helix" evidence="13">
    <location>
        <begin position="683"/>
        <end position="686"/>
    </location>
</feature>
<feature type="helix" evidence="13">
    <location>
        <begin position="707"/>
        <end position="714"/>
    </location>
</feature>
<feature type="strand" evidence="13">
    <location>
        <begin position="715"/>
        <end position="717"/>
    </location>
</feature>
<feature type="strand" evidence="13">
    <location>
        <begin position="723"/>
        <end position="725"/>
    </location>
</feature>
<feature type="helix" evidence="13">
    <location>
        <begin position="730"/>
        <end position="732"/>
    </location>
</feature>
<feature type="strand" evidence="13">
    <location>
        <begin position="739"/>
        <end position="743"/>
    </location>
</feature>
<feature type="helix" evidence="13">
    <location>
        <begin position="744"/>
        <end position="751"/>
    </location>
</feature>
<feature type="strand" evidence="13">
    <location>
        <begin position="753"/>
        <end position="759"/>
    </location>
</feature>
<feature type="strand" evidence="13">
    <location>
        <begin position="766"/>
        <end position="768"/>
    </location>
</feature>
<feature type="helix" evidence="13">
    <location>
        <begin position="770"/>
        <end position="772"/>
    </location>
</feature>
<feature type="helix" evidence="13">
    <location>
        <begin position="778"/>
        <end position="780"/>
    </location>
</feature>
<feature type="helix" evidence="13">
    <location>
        <begin position="784"/>
        <end position="788"/>
    </location>
</feature>
<feature type="strand" evidence="13">
    <location>
        <begin position="791"/>
        <end position="796"/>
    </location>
</feature>
<feature type="strand" evidence="13">
    <location>
        <begin position="804"/>
        <end position="810"/>
    </location>
</feature>
<feature type="strand" evidence="13">
    <location>
        <begin position="821"/>
        <end position="826"/>
    </location>
</feature>
<feature type="helix" evidence="13">
    <location>
        <begin position="835"/>
        <end position="840"/>
    </location>
</feature>
<feature type="strand" evidence="13">
    <location>
        <begin position="843"/>
        <end position="845"/>
    </location>
</feature>
<name>CPNT_MYCTU</name>
<gene>
    <name evidence="7" type="primary">cpnT</name>
    <name evidence="11" type="ordered locus">Rv3903c</name>
</gene>
<keyword id="KW-0002">3D-structure</keyword>
<keyword id="KW-0998">Cell outer membrane</keyword>
<keyword id="KW-1035">Host cytoplasm</keyword>
<keyword id="KW-0378">Hydrolase</keyword>
<keyword id="KW-0406">Ion transport</keyword>
<keyword id="KW-0472">Membrane</keyword>
<keyword id="KW-0520">NAD</keyword>
<keyword id="KW-0626">Porin</keyword>
<keyword id="KW-1185">Reference proteome</keyword>
<keyword id="KW-0964">Secreted</keyword>
<keyword id="KW-0800">Toxin</keyword>
<keyword id="KW-0812">Transmembrane</keyword>
<keyword id="KW-1134">Transmembrane beta strand</keyword>
<keyword id="KW-0813">Transport</keyword>
<keyword id="KW-0843">Virulence</keyword>
<reference key="1">
    <citation type="journal article" date="1998" name="Nature">
        <title>Deciphering the biology of Mycobacterium tuberculosis from the complete genome sequence.</title>
        <authorList>
            <person name="Cole S.T."/>
            <person name="Brosch R."/>
            <person name="Parkhill J."/>
            <person name="Garnier T."/>
            <person name="Churcher C.M."/>
            <person name="Harris D.E."/>
            <person name="Gordon S.V."/>
            <person name="Eiglmeier K."/>
            <person name="Gas S."/>
            <person name="Barry C.E. III"/>
            <person name="Tekaia F."/>
            <person name="Badcock K."/>
            <person name="Basham D."/>
            <person name="Brown D."/>
            <person name="Chillingworth T."/>
            <person name="Connor R."/>
            <person name="Davies R.M."/>
            <person name="Devlin K."/>
            <person name="Feltwell T."/>
            <person name="Gentles S."/>
            <person name="Hamlin N."/>
            <person name="Holroyd S."/>
            <person name="Hornsby T."/>
            <person name="Jagels K."/>
            <person name="Krogh A."/>
            <person name="McLean J."/>
            <person name="Moule S."/>
            <person name="Murphy L.D."/>
            <person name="Oliver S."/>
            <person name="Osborne J."/>
            <person name="Quail M.A."/>
            <person name="Rajandream M.A."/>
            <person name="Rogers J."/>
            <person name="Rutter S."/>
            <person name="Seeger K."/>
            <person name="Skelton S."/>
            <person name="Squares S."/>
            <person name="Squares R."/>
            <person name="Sulston J.E."/>
            <person name="Taylor K."/>
            <person name="Whitehead S."/>
            <person name="Barrell B.G."/>
        </authorList>
    </citation>
    <scope>NUCLEOTIDE SEQUENCE [LARGE SCALE GENOMIC DNA]</scope>
    <source>
        <strain>ATCC 25618 / H37Rv</strain>
    </source>
</reference>
<reference key="2">
    <citation type="journal article" date="2011" name="Mol. Cell. Proteomics">
        <title>Proteogenomic analysis of Mycobacterium tuberculosis by high resolution mass spectrometry.</title>
        <authorList>
            <person name="Kelkar D.S."/>
            <person name="Kumar D."/>
            <person name="Kumar P."/>
            <person name="Balakrishnan L."/>
            <person name="Muthusamy B."/>
            <person name="Yadav A.K."/>
            <person name="Shrivastava P."/>
            <person name="Marimuthu A."/>
            <person name="Anand S."/>
            <person name="Sundaram H."/>
            <person name="Kingsbury R."/>
            <person name="Harsha H.C."/>
            <person name="Nair B."/>
            <person name="Prasad T.S."/>
            <person name="Chauhan D.S."/>
            <person name="Katoch K."/>
            <person name="Katoch V.M."/>
            <person name="Kumar P."/>
            <person name="Chaerkady R."/>
            <person name="Ramachandran S."/>
            <person name="Dash D."/>
            <person name="Pandey A."/>
        </authorList>
    </citation>
    <scope>IDENTIFICATION BY MASS SPECTROMETRY [LARGE SCALE ANALYSIS]</scope>
    <source>
        <strain>ATCC 25618 / H37Rv</strain>
    </source>
</reference>
<reference key="3">
    <citation type="journal article" date="2014" name="Proc. Natl. Acad. Sci. U.S.A.">
        <title>An outer membrane channel protein of Mycobacterium tuberculosis with exotoxin activity.</title>
        <authorList>
            <person name="Danilchanka O."/>
            <person name="Sun J."/>
            <person name="Pavlenok M."/>
            <person name="Maueroeder C."/>
            <person name="Speer A."/>
            <person name="Siroy A."/>
            <person name="Marrero J."/>
            <person name="Trujillo C."/>
            <person name="Mayhew D.L."/>
            <person name="Doornbos K.S."/>
            <person name="Munoz L.E."/>
            <person name="Herrmann M."/>
            <person name="Ehrt S."/>
            <person name="Berens C."/>
            <person name="Niederweis M."/>
        </authorList>
    </citation>
    <scope>FUNCTION</scope>
    <scope>SUBUNIT</scope>
    <scope>SUBCELLULAR LOCATION</scope>
    <scope>PROTEOLYTIC CLEAVAGE</scope>
    <scope>DISRUPTION PHENOTYPE</scope>
    <scope>MUTAGENESIS OF GLY-818</scope>
</reference>
<reference key="4">
    <citation type="journal article" date="2015" name="Antimicrob. Agents Chemother.">
        <title>The Mycobacterium tuberculosis outer membrane channel protein CpnT confers susceptibility to toxic molecules.</title>
        <authorList>
            <person name="Danilchanka O."/>
            <person name="Pires D."/>
            <person name="Anes E."/>
            <person name="Niederweis M."/>
        </authorList>
    </citation>
    <scope>DISRUPTION PHENOTYPE</scope>
    <source>
        <strain>H37Rv</strain>
    </source>
</reference>
<reference evidence="12" key="5">
    <citation type="journal article" date="2015" name="Nat. Struct. Mol. Biol.">
        <title>The tuberculosis necrotizing toxin kills macrophages by hydrolyzing NAD.</title>
        <authorList>
            <person name="Sun J."/>
            <person name="Siroy A."/>
            <person name="Lokareddy R.K."/>
            <person name="Speer A."/>
            <person name="Doornbos K.S."/>
            <person name="Cingolani G."/>
            <person name="Niederweis M."/>
        </authorList>
    </citation>
    <scope>X-RAY CRYSTALLOGRAPHY (1.10 ANGSTROMS) OF 651-846 IN COMPLEX WITH IFT</scope>
    <scope>FUNCTION</scope>
    <scope>CATALYTIC ACTIVITY</scope>
    <scope>ACTIVITY REGULATION</scope>
    <scope>BIOPHYSICOCHEMICAL PROPERTIES</scope>
    <scope>INTERACTION WITH IFT</scope>
    <scope>SUBCELLULAR LOCATION</scope>
    <scope>DISRUPTION PHENOTYPE</scope>
    <scope>MUTAGENESIS OF TYR-765; HIS-792; GLY-818 AND GLN-822</scope>
</reference>
<sequence>MAPLAVDPAALDSAGGAVVAAGAGLGAVISSLTAALAGCAGMAGDDPAGAVFGRSYDGSAAALVQAMSVARNGLCNLGDGVRMSAHNYSLAEAMSDVAGRAAPLPAPPPSGCVGVGAPPSAVGGGGGAPKGWGWVAPYIGMIWPNGDSTKLRAAAVAWRSAGTQFALTEIQSTAGPMGVIRAQQLPEAGLIESAFADAYASTTAVVGQCHQLAAQLDAYAARIDAVHAAVLDLLARICDPLTGIKEVWEFLTDQDEDEIQRIAHDIAVVVDQFSGEVDALAAEITAVVSHAEAVITAMADHAGKQWDRFLHSNPVGVVIDGTGQQLKGFGEEAFGMAKDSWDLGPLRASIDPFGWYRSWEEMLTGMAPLAGLGGENAPGVVESWKQFGKSLIHWDEWTTNPNEALGKTVFDAATLALPGGPLSKLGSKGRDILAGVRGLKERLEPTTPHLEPPATPPRPGPQPPRIEPPESGHPAPAPAAKPAPVPANGPLPHSPTESKPPPVDRPAEPVAPSSASAGQPRVSAATTPGTHVPHGLPQPGEHVPAQAPPATTLLGGPPVESAPATAHQPQWATTPAAPAAAPHSTPGGVHSTESGPHGRSLSAHGSEPTHDGASHGSGHGSGSEPPGLHAPHREQQLAMHSNEPAGEGWHRLSDEAVDPQYGEPLSRHWDFTDNPADRSRINPVVAQLMEDPNAPFGRDPQGQPYTQERYQERFNSVGPWGQQYSNFPPNNGAVPGTRIAYTNLEKFLSDYGPQLDRIGGDQGKYLAIMEHGRPASWEQRALHVTSLRDPYHAYTIDWLPEGWFIEVSEVAPGCGQPGGSIQVRIFDHQNEMRKVEELIRRGVLRQ</sequence>
<dbReference type="EC" id="3.2.2.5" evidence="6"/>
<dbReference type="EMBL" id="AL123456">
    <property type="protein sequence ID" value="CCP46732.1"/>
    <property type="molecule type" value="Genomic_DNA"/>
</dbReference>
<dbReference type="RefSeq" id="NP_218420.1">
    <property type="nucleotide sequence ID" value="NC_000962.3"/>
</dbReference>
<dbReference type="RefSeq" id="WP_003899759.1">
    <property type="nucleotide sequence ID" value="NZ_NVQJ01000005.1"/>
</dbReference>
<dbReference type="PDB" id="4QLP">
    <property type="method" value="X-ray"/>
    <property type="resolution" value="1.10 A"/>
    <property type="chains" value="B=651-846"/>
</dbReference>
<dbReference type="PDBsum" id="4QLP"/>
<dbReference type="SMR" id="O05442"/>
<dbReference type="FunCoup" id="O05442">
    <property type="interactions" value="1"/>
</dbReference>
<dbReference type="IntAct" id="O05442">
    <property type="interactions" value="1"/>
</dbReference>
<dbReference type="STRING" id="83332.Rv3903c"/>
<dbReference type="TCDB" id="1.B.164.1.1">
    <property type="family name" value="the mycobacterial outer membrane calcium channel (cpnt) family"/>
</dbReference>
<dbReference type="PaxDb" id="83332-Rv3903c"/>
<dbReference type="GeneID" id="886229"/>
<dbReference type="KEGG" id="mtu:Rv3903c"/>
<dbReference type="KEGG" id="mtv:RVBD_3903c"/>
<dbReference type="PATRIC" id="fig|83332.111.peg.4347"/>
<dbReference type="TubercuList" id="Rv3903c"/>
<dbReference type="eggNOG" id="COG0803">
    <property type="taxonomic scope" value="Bacteria"/>
</dbReference>
<dbReference type="InParanoid" id="O05442"/>
<dbReference type="OrthoDB" id="4752312at2"/>
<dbReference type="Reactome" id="R-HSA-9637698">
    <property type="pathway name" value="Phagocyte cell death caused by cytosolic Mtb"/>
</dbReference>
<dbReference type="EvolutionaryTrace" id="O05442"/>
<dbReference type="Proteomes" id="UP000001584">
    <property type="component" value="Chromosome"/>
</dbReference>
<dbReference type="GO" id="GO:0009279">
    <property type="term" value="C:cell outer membrane"/>
    <property type="evidence" value="ECO:0007669"/>
    <property type="project" value="UniProtKB-SubCell"/>
</dbReference>
<dbReference type="GO" id="GO:0009986">
    <property type="term" value="C:cell surface"/>
    <property type="evidence" value="ECO:0007669"/>
    <property type="project" value="UniProtKB-SubCell"/>
</dbReference>
<dbReference type="GO" id="GO:0005829">
    <property type="term" value="C:cytosol"/>
    <property type="evidence" value="ECO:0000304"/>
    <property type="project" value="Reactome"/>
</dbReference>
<dbReference type="GO" id="GO:0005576">
    <property type="term" value="C:extracellular region"/>
    <property type="evidence" value="ECO:0007669"/>
    <property type="project" value="UniProtKB-SubCell"/>
</dbReference>
<dbReference type="GO" id="GO:0044164">
    <property type="term" value="C:host cell cytosol"/>
    <property type="evidence" value="ECO:0007669"/>
    <property type="project" value="UniProtKB-SubCell"/>
</dbReference>
<dbReference type="GO" id="GO:0009274">
    <property type="term" value="C:peptidoglycan-based cell wall"/>
    <property type="evidence" value="ECO:0007005"/>
    <property type="project" value="UniProtKB"/>
</dbReference>
<dbReference type="GO" id="GO:0046930">
    <property type="term" value="C:pore complex"/>
    <property type="evidence" value="ECO:0007669"/>
    <property type="project" value="UniProtKB-KW"/>
</dbReference>
<dbReference type="GO" id="GO:0003953">
    <property type="term" value="F:NAD+ nucleosidase activity"/>
    <property type="evidence" value="ECO:0007669"/>
    <property type="project" value="UniProtKB-EC"/>
</dbReference>
<dbReference type="GO" id="GO:0061809">
    <property type="term" value="F:NAD+ nucleosidase activity, cyclic ADP-ribose generating"/>
    <property type="evidence" value="ECO:0000304"/>
    <property type="project" value="Reactome"/>
</dbReference>
<dbReference type="GO" id="GO:0050135">
    <property type="term" value="F:NADP+ nucleosidase activity"/>
    <property type="evidence" value="ECO:0007669"/>
    <property type="project" value="InterPro"/>
</dbReference>
<dbReference type="GO" id="GO:0015288">
    <property type="term" value="F:porin activity"/>
    <property type="evidence" value="ECO:0007669"/>
    <property type="project" value="UniProtKB-KW"/>
</dbReference>
<dbReference type="GO" id="GO:0090729">
    <property type="term" value="F:toxin activity"/>
    <property type="evidence" value="ECO:0007669"/>
    <property type="project" value="UniProtKB-KW"/>
</dbReference>
<dbReference type="GO" id="GO:0006811">
    <property type="term" value="P:monoatomic ion transport"/>
    <property type="evidence" value="ECO:0007669"/>
    <property type="project" value="UniProtKB-KW"/>
</dbReference>
<dbReference type="GO" id="GO:0001907">
    <property type="term" value="P:symbiont-mediated killing of host cell"/>
    <property type="evidence" value="ECO:0000304"/>
    <property type="project" value="Reactome"/>
</dbReference>
<dbReference type="InterPro" id="IPR025331">
    <property type="entry name" value="TNT"/>
</dbReference>
<dbReference type="Pfam" id="PF14021">
    <property type="entry name" value="TNT"/>
    <property type="match status" value="1"/>
</dbReference>